<dbReference type="EC" id="4.2.3.3" evidence="1"/>
<dbReference type="EMBL" id="CP000633">
    <property type="protein sequence ID" value="ACM35152.1"/>
    <property type="molecule type" value="Genomic_DNA"/>
</dbReference>
<dbReference type="RefSeq" id="WP_012654682.1">
    <property type="nucleotide sequence ID" value="NC_011989.1"/>
</dbReference>
<dbReference type="SMR" id="B9JYQ6"/>
<dbReference type="STRING" id="311402.Avi_0240"/>
<dbReference type="KEGG" id="avi:Avi_0240"/>
<dbReference type="eggNOG" id="COG1803">
    <property type="taxonomic scope" value="Bacteria"/>
</dbReference>
<dbReference type="HOGENOM" id="CLU_120420_1_0_5"/>
<dbReference type="Proteomes" id="UP000001596">
    <property type="component" value="Chromosome 1"/>
</dbReference>
<dbReference type="GO" id="GO:0005829">
    <property type="term" value="C:cytosol"/>
    <property type="evidence" value="ECO:0007669"/>
    <property type="project" value="TreeGrafter"/>
</dbReference>
<dbReference type="GO" id="GO:0008929">
    <property type="term" value="F:methylglyoxal synthase activity"/>
    <property type="evidence" value="ECO:0007669"/>
    <property type="project" value="UniProtKB-UniRule"/>
</dbReference>
<dbReference type="GO" id="GO:0019242">
    <property type="term" value="P:methylglyoxal biosynthetic process"/>
    <property type="evidence" value="ECO:0007669"/>
    <property type="project" value="UniProtKB-UniRule"/>
</dbReference>
<dbReference type="CDD" id="cd01422">
    <property type="entry name" value="MGS"/>
    <property type="match status" value="1"/>
</dbReference>
<dbReference type="Gene3D" id="3.40.50.1380">
    <property type="entry name" value="Methylglyoxal synthase-like domain"/>
    <property type="match status" value="1"/>
</dbReference>
<dbReference type="HAMAP" id="MF_00549">
    <property type="entry name" value="Methylglyoxal_synth"/>
    <property type="match status" value="1"/>
</dbReference>
<dbReference type="InterPro" id="IPR004363">
    <property type="entry name" value="Methylgl_synth"/>
</dbReference>
<dbReference type="InterPro" id="IPR018148">
    <property type="entry name" value="Methylglyoxal_synth_AS"/>
</dbReference>
<dbReference type="InterPro" id="IPR011607">
    <property type="entry name" value="MGS-like_dom"/>
</dbReference>
<dbReference type="InterPro" id="IPR036914">
    <property type="entry name" value="MGS-like_dom_sf"/>
</dbReference>
<dbReference type="NCBIfam" id="TIGR00160">
    <property type="entry name" value="MGSA"/>
    <property type="match status" value="1"/>
</dbReference>
<dbReference type="NCBIfam" id="NF003559">
    <property type="entry name" value="PRK05234.1"/>
    <property type="match status" value="1"/>
</dbReference>
<dbReference type="PANTHER" id="PTHR30492">
    <property type="entry name" value="METHYLGLYOXAL SYNTHASE"/>
    <property type="match status" value="1"/>
</dbReference>
<dbReference type="PANTHER" id="PTHR30492:SF0">
    <property type="entry name" value="METHYLGLYOXAL SYNTHASE"/>
    <property type="match status" value="1"/>
</dbReference>
<dbReference type="Pfam" id="PF02142">
    <property type="entry name" value="MGS"/>
    <property type="match status" value="1"/>
</dbReference>
<dbReference type="PIRSF" id="PIRSF006614">
    <property type="entry name" value="Methylglyox_syn"/>
    <property type="match status" value="1"/>
</dbReference>
<dbReference type="SMART" id="SM00851">
    <property type="entry name" value="MGS"/>
    <property type="match status" value="1"/>
</dbReference>
<dbReference type="SUPFAM" id="SSF52335">
    <property type="entry name" value="Methylglyoxal synthase-like"/>
    <property type="match status" value="1"/>
</dbReference>
<dbReference type="PROSITE" id="PS01335">
    <property type="entry name" value="METHYLGLYOXAL_SYNTH"/>
    <property type="match status" value="1"/>
</dbReference>
<dbReference type="PROSITE" id="PS51855">
    <property type="entry name" value="MGS"/>
    <property type="match status" value="1"/>
</dbReference>
<gene>
    <name evidence="1" type="primary">mgsA</name>
    <name type="ordered locus">Avi_0240</name>
</gene>
<accession>B9JYQ6</accession>
<comment type="function">
    <text evidence="1">Catalyzes the formation of methylglyoxal from dihydroxyacetone phosphate.</text>
</comment>
<comment type="catalytic activity">
    <reaction evidence="1">
        <text>dihydroxyacetone phosphate = methylglyoxal + phosphate</text>
        <dbReference type="Rhea" id="RHEA:17937"/>
        <dbReference type="ChEBI" id="CHEBI:17158"/>
        <dbReference type="ChEBI" id="CHEBI:43474"/>
        <dbReference type="ChEBI" id="CHEBI:57642"/>
        <dbReference type="EC" id="4.2.3.3"/>
    </reaction>
</comment>
<comment type="similarity">
    <text evidence="1">Belongs to the methylglyoxal synthase family.</text>
</comment>
<evidence type="ECO:0000255" key="1">
    <source>
        <dbReference type="HAMAP-Rule" id="MF_00549"/>
    </source>
</evidence>
<proteinExistence type="inferred from homology"/>
<reference key="1">
    <citation type="journal article" date="2009" name="J. Bacteriol.">
        <title>Genome sequences of three Agrobacterium biovars help elucidate the evolution of multichromosome genomes in bacteria.</title>
        <authorList>
            <person name="Slater S.C."/>
            <person name="Goldman B.S."/>
            <person name="Goodner B."/>
            <person name="Setubal J.C."/>
            <person name="Farrand S.K."/>
            <person name="Nester E.W."/>
            <person name="Burr T.J."/>
            <person name="Banta L."/>
            <person name="Dickerman A.W."/>
            <person name="Paulsen I."/>
            <person name="Otten L."/>
            <person name="Suen G."/>
            <person name="Welch R."/>
            <person name="Almeida N.F."/>
            <person name="Arnold F."/>
            <person name="Burton O.T."/>
            <person name="Du Z."/>
            <person name="Ewing A."/>
            <person name="Godsy E."/>
            <person name="Heisel S."/>
            <person name="Houmiel K.L."/>
            <person name="Jhaveri J."/>
            <person name="Lu J."/>
            <person name="Miller N.M."/>
            <person name="Norton S."/>
            <person name="Chen Q."/>
            <person name="Phoolcharoen W."/>
            <person name="Ohlin V."/>
            <person name="Ondrusek D."/>
            <person name="Pride N."/>
            <person name="Stricklin S.L."/>
            <person name="Sun J."/>
            <person name="Wheeler C."/>
            <person name="Wilson L."/>
            <person name="Zhu H."/>
            <person name="Wood D.W."/>
        </authorList>
    </citation>
    <scope>NUCLEOTIDE SEQUENCE [LARGE SCALE GENOMIC DNA]</scope>
    <source>
        <strain>ATCC BAA-846 / DSM 112012 / S4</strain>
    </source>
</reference>
<feature type="chain" id="PRO_1000146615" description="Methylglyoxal synthase">
    <location>
        <begin position="1"/>
        <end position="126"/>
    </location>
</feature>
<feature type="domain" description="MGS-like" evidence="1">
    <location>
        <begin position="1"/>
        <end position="126"/>
    </location>
</feature>
<feature type="active site" description="Proton donor/acceptor" evidence="1">
    <location>
        <position position="65"/>
    </location>
</feature>
<feature type="binding site" evidence="1">
    <location>
        <position position="12"/>
    </location>
    <ligand>
        <name>substrate</name>
    </ligand>
</feature>
<feature type="binding site" evidence="1">
    <location>
        <position position="16"/>
    </location>
    <ligand>
        <name>substrate</name>
    </ligand>
</feature>
<feature type="binding site" evidence="1">
    <location>
        <begin position="38"/>
        <end position="41"/>
    </location>
    <ligand>
        <name>substrate</name>
    </ligand>
</feature>
<feature type="binding site" evidence="1">
    <location>
        <begin position="59"/>
        <end position="60"/>
    </location>
    <ligand>
        <name>substrate</name>
    </ligand>
</feature>
<feature type="binding site" evidence="1">
    <location>
        <position position="92"/>
    </location>
    <ligand>
        <name>substrate</name>
    </ligand>
</feature>
<protein>
    <recommendedName>
        <fullName evidence="1">Methylglyoxal synthase</fullName>
        <shortName evidence="1">MGS</shortName>
        <ecNumber evidence="1">4.2.3.3</ecNumber>
    </recommendedName>
</protein>
<sequence>MAERQKIALIAHDKMKDEMAAFARHHQRFLEQWQIVATGTTGARVHDACPKLDVLRMKSGPLGGDQQIGAMIAQEEVAMLIFFVDPLTPMPHDVDVKALMRLAILYDTPMALNRATADRLLPVITE</sequence>
<organism>
    <name type="scientific">Allorhizobium ampelinum (strain ATCC BAA-846 / DSM 112012 / S4)</name>
    <name type="common">Agrobacterium vitis (strain S4)</name>
    <dbReference type="NCBI Taxonomy" id="311402"/>
    <lineage>
        <taxon>Bacteria</taxon>
        <taxon>Pseudomonadati</taxon>
        <taxon>Pseudomonadota</taxon>
        <taxon>Alphaproteobacteria</taxon>
        <taxon>Hyphomicrobiales</taxon>
        <taxon>Rhizobiaceae</taxon>
        <taxon>Rhizobium/Agrobacterium group</taxon>
        <taxon>Allorhizobium</taxon>
        <taxon>Allorhizobium ampelinum</taxon>
    </lineage>
</organism>
<name>MGSA_ALLAM</name>
<keyword id="KW-0456">Lyase</keyword>
<keyword id="KW-1185">Reference proteome</keyword>